<sequence length="166" mass="18484">MSIAYDLLLSILIYLPAFVANGSGPFIKRGTPIDFGKNFVDGRRLFGDGKTFEGLIVALTFGTTVGVIISKFFTAEWTLISFLESLFAMIGDMIGAFIKRRLGIPRGGRVLGLDQLDFVLGASLILVLMRVNITWYQFLFICGLAFFLHQGTNYVAYLLKIKNVPW</sequence>
<organism>
    <name type="scientific">Saccharolobus islandicus (strain L.S.2.15 / Lassen #1)</name>
    <name type="common">Sulfolobus islandicus</name>
    <dbReference type="NCBI Taxonomy" id="429572"/>
    <lineage>
        <taxon>Archaea</taxon>
        <taxon>Thermoproteota</taxon>
        <taxon>Thermoprotei</taxon>
        <taxon>Sulfolobales</taxon>
        <taxon>Sulfolobaceae</taxon>
        <taxon>Saccharolobus</taxon>
    </lineage>
</organism>
<accession>C3MQ04</accession>
<proteinExistence type="inferred from homology"/>
<keyword id="KW-1003">Cell membrane</keyword>
<keyword id="KW-0444">Lipid biosynthesis</keyword>
<keyword id="KW-0443">Lipid metabolism</keyword>
<keyword id="KW-0460">Magnesium</keyword>
<keyword id="KW-0472">Membrane</keyword>
<keyword id="KW-0594">Phospholipid biosynthesis</keyword>
<keyword id="KW-1208">Phospholipid metabolism</keyword>
<keyword id="KW-0808">Transferase</keyword>
<keyword id="KW-0812">Transmembrane</keyword>
<keyword id="KW-1133">Transmembrane helix</keyword>
<evidence type="ECO:0000255" key="1">
    <source>
        <dbReference type="HAMAP-Rule" id="MF_01117"/>
    </source>
</evidence>
<gene>
    <name evidence="1" type="primary">carS</name>
    <name type="ordered locus">LS215_1460</name>
</gene>
<name>CDPAS_SACI2</name>
<reference key="1">
    <citation type="journal article" date="2009" name="Proc. Natl. Acad. Sci. U.S.A.">
        <title>Biogeography of the Sulfolobus islandicus pan-genome.</title>
        <authorList>
            <person name="Reno M.L."/>
            <person name="Held N.L."/>
            <person name="Fields C.J."/>
            <person name="Burke P.V."/>
            <person name="Whitaker R.J."/>
        </authorList>
    </citation>
    <scope>NUCLEOTIDE SEQUENCE [LARGE SCALE GENOMIC DNA]</scope>
    <source>
        <strain>L.S.2.15 / Lassen #1</strain>
    </source>
</reference>
<comment type="function">
    <text evidence="1">Catalyzes the formation of CDP-2,3-bis-(O-geranylgeranyl)-sn-glycerol (CDP-archaeol) from 2,3-bis-(O-geranylgeranyl)-sn-glycerol 1-phosphate (DGGGP) and CTP. This reaction is the third ether-bond-formation step in the biosynthesis of archaeal membrane lipids.</text>
</comment>
<comment type="catalytic activity">
    <reaction evidence="1">
        <text>2,3-bis-O-(geranylgeranyl)-sn-glycerol 1-phosphate + CTP + H(+) = CDP-2,3-bis-O-(geranylgeranyl)-sn-glycerol + diphosphate</text>
        <dbReference type="Rhea" id="RHEA:25690"/>
        <dbReference type="ChEBI" id="CHEBI:15378"/>
        <dbReference type="ChEBI" id="CHEBI:33019"/>
        <dbReference type="ChEBI" id="CHEBI:37563"/>
        <dbReference type="ChEBI" id="CHEBI:58837"/>
        <dbReference type="ChEBI" id="CHEBI:58838"/>
        <dbReference type="EC" id="2.7.7.67"/>
    </reaction>
</comment>
<comment type="cofactor">
    <cofactor evidence="1">
        <name>Mg(2+)</name>
        <dbReference type="ChEBI" id="CHEBI:18420"/>
    </cofactor>
</comment>
<comment type="pathway">
    <text evidence="1">Membrane lipid metabolism; glycerophospholipid metabolism.</text>
</comment>
<comment type="subcellular location">
    <subcellularLocation>
        <location evidence="1">Cell membrane</location>
        <topology evidence="1">Multi-pass membrane protein</topology>
    </subcellularLocation>
</comment>
<comment type="similarity">
    <text evidence="1">Belongs to the CDP-archaeol synthase family.</text>
</comment>
<protein>
    <recommendedName>
        <fullName evidence="1">CDP-archaeol synthase</fullName>
        <ecNumber evidence="1">2.7.7.67</ecNumber>
    </recommendedName>
    <alternativeName>
        <fullName evidence="1">CDP-2,3-bis-(O-geranylgeranyl)-sn-glycerol synthase</fullName>
    </alternativeName>
</protein>
<dbReference type="EC" id="2.7.7.67" evidence="1"/>
<dbReference type="EMBL" id="CP001399">
    <property type="protein sequence ID" value="ACP35467.1"/>
    <property type="molecule type" value="Genomic_DNA"/>
</dbReference>
<dbReference type="RefSeq" id="WP_010923068.1">
    <property type="nucleotide sequence ID" value="NC_012589.1"/>
</dbReference>
<dbReference type="SMR" id="C3MQ04"/>
<dbReference type="KEGG" id="sis:LS215_1460"/>
<dbReference type="HOGENOM" id="CLU_105710_0_0_2"/>
<dbReference type="OrthoDB" id="45383at2157"/>
<dbReference type="UniPathway" id="UPA00940"/>
<dbReference type="Proteomes" id="UP000001747">
    <property type="component" value="Chromosome"/>
</dbReference>
<dbReference type="GO" id="GO:0005886">
    <property type="term" value="C:plasma membrane"/>
    <property type="evidence" value="ECO:0007669"/>
    <property type="project" value="UniProtKB-SubCell"/>
</dbReference>
<dbReference type="GO" id="GO:0043338">
    <property type="term" value="F:CDP-2,3-bis-(O-geranylgeranyl)-sn-glycerol synthase activity"/>
    <property type="evidence" value="ECO:0007669"/>
    <property type="project" value="UniProtKB-EC"/>
</dbReference>
<dbReference type="GO" id="GO:0046474">
    <property type="term" value="P:glycerophospholipid biosynthetic process"/>
    <property type="evidence" value="ECO:0007669"/>
    <property type="project" value="UniProtKB-UniRule"/>
</dbReference>
<dbReference type="HAMAP" id="MF_01117">
    <property type="entry name" value="CDP_archaeol_synth"/>
    <property type="match status" value="1"/>
</dbReference>
<dbReference type="InterPro" id="IPR032690">
    <property type="entry name" value="CarS"/>
</dbReference>
<dbReference type="InterPro" id="IPR002726">
    <property type="entry name" value="CarS_archaea"/>
</dbReference>
<dbReference type="NCBIfam" id="NF003114">
    <property type="entry name" value="PRK04032.1"/>
    <property type="match status" value="1"/>
</dbReference>
<dbReference type="PANTHER" id="PTHR39650">
    <property type="entry name" value="CDP-ARCHAEOL SYNTHASE"/>
    <property type="match status" value="1"/>
</dbReference>
<dbReference type="PANTHER" id="PTHR39650:SF1">
    <property type="entry name" value="CDP-ARCHAEOL SYNTHASE"/>
    <property type="match status" value="1"/>
</dbReference>
<dbReference type="Pfam" id="PF01864">
    <property type="entry name" value="CarS-like"/>
    <property type="match status" value="1"/>
</dbReference>
<feature type="chain" id="PRO_1000213607" description="CDP-archaeol synthase">
    <location>
        <begin position="1"/>
        <end position="166"/>
    </location>
</feature>
<feature type="transmembrane region" description="Helical" evidence="1">
    <location>
        <begin position="7"/>
        <end position="27"/>
    </location>
</feature>
<feature type="transmembrane region" description="Helical" evidence="1">
    <location>
        <begin position="55"/>
        <end position="75"/>
    </location>
</feature>
<feature type="transmembrane region" description="Helical" evidence="1">
    <location>
        <begin position="78"/>
        <end position="98"/>
    </location>
</feature>
<feature type="transmembrane region" description="Helical" evidence="1">
    <location>
        <begin position="116"/>
        <end position="136"/>
    </location>
</feature>
<feature type="transmembrane region" description="Helical" evidence="1">
    <location>
        <begin position="138"/>
        <end position="158"/>
    </location>
</feature>